<protein>
    <recommendedName>
        <fullName evidence="1">Protein PB1-F2</fullName>
    </recommendedName>
</protein>
<organismHost>
    <name type="scientific">Aves</name>
    <dbReference type="NCBI Taxonomy" id="8782"/>
</organismHost>
<reference key="1">
    <citation type="journal article" date="2006" name="Science">
        <title>Large-scale sequence analysis of avian influenza isolates.</title>
        <authorList>
            <person name="Obenauer J.C."/>
            <person name="Denson J."/>
            <person name="Mehta P.K."/>
            <person name="Su X."/>
            <person name="Mukatira S."/>
            <person name="Finkelstein D.B."/>
            <person name="Xu X."/>
            <person name="Wang J."/>
            <person name="Ma J."/>
            <person name="Fan Y."/>
            <person name="Rakestraw K.M."/>
            <person name="Webster R.G."/>
            <person name="Hoffmann E."/>
            <person name="Krauss S."/>
            <person name="Zheng J."/>
            <person name="Zhang Z."/>
            <person name="Naeve C.W."/>
        </authorList>
    </citation>
    <scope>NUCLEOTIDE SEQUENCE [GENOMIC RNA]</scope>
</reference>
<comment type="function">
    <text evidence="1">Plays an important role in promoting lung pathology in both primary viral infection and secondary bacterial infection. Promotes alteration of mitochondrial morphology, dissipation of mitochondrial membrane potential, and cell death. Alternatively, inhibits the production of interferon in the infected cell at the level of host mitochondrial antiviral signaling MAVS. Its level of expression differs greatly depending on which cell type is infected, in a manner that is independent of the levels of expression of other viral proteins. Monocytic cells are more affected than epithelial cells. Seems to disable virus-infected monocytes or other host innate immune cells. During early stage of infection, predisposes the mitochondria to permeability transition through interaction with host SLC25A6/ANT3 and VDAC1. These proteins participate in the formation of the permeability transition pore complex (PTPC) responsible of the release of mitochondrial products that triggers apoptosis.</text>
</comment>
<comment type="subunit">
    <text evidence="1">Oligomer. Interacts with human SLC25A6/ANT3 and VDAC1. Interacts with host MAVS.</text>
</comment>
<comment type="subcellular location">
    <subcellularLocation>
        <location evidence="1">Host mitochondrion inner membrane</location>
    </subcellularLocation>
    <subcellularLocation>
        <location evidence="1">Host nucleus</location>
    </subcellularLocation>
    <subcellularLocation>
        <location evidence="1">Host cytoplasm</location>
        <location evidence="1">Host cytosol</location>
    </subcellularLocation>
    <text evidence="1">Inner mitochondrial membrane in most cells types. Otherwise is detected in the nucleus and cytosol.</text>
</comment>
<comment type="miscellaneous">
    <text>Is not encoded in all strains, and seems to be dispensable for replication.</text>
</comment>
<comment type="similarity">
    <text evidence="1">Belongs to the influenza viruses PB1-F2 family.</text>
</comment>
<gene>
    <name evidence="1" type="primary">PB1</name>
</gene>
<accession>Q0A407</accession>
<organism>
    <name type="scientific">Influenza A virus (strain A/Gull/Maryland/704/1977 H13N6)</name>
    <dbReference type="NCBI Taxonomy" id="384499"/>
    <lineage>
        <taxon>Viruses</taxon>
        <taxon>Riboviria</taxon>
        <taxon>Orthornavirae</taxon>
        <taxon>Negarnaviricota</taxon>
        <taxon>Polyploviricotina</taxon>
        <taxon>Insthoviricetes</taxon>
        <taxon>Articulavirales</taxon>
        <taxon>Orthomyxoviridae</taxon>
        <taxon>Alphainfluenzavirus</taxon>
        <taxon>Alphainfluenzavirus influenzae</taxon>
        <taxon>Influenza A virus</taxon>
    </lineage>
</organism>
<name>PB1F2_I77AF</name>
<dbReference type="EMBL" id="CY014700">
    <property type="protein sequence ID" value="ABI84575.1"/>
    <property type="molecule type" value="Genomic_RNA"/>
</dbReference>
<dbReference type="SMR" id="Q0A407"/>
<dbReference type="Proteomes" id="UP000000828">
    <property type="component" value="Genome"/>
</dbReference>
<dbReference type="GO" id="GO:0044164">
    <property type="term" value="C:host cell cytosol"/>
    <property type="evidence" value="ECO:0007669"/>
    <property type="project" value="UniProtKB-SubCell"/>
</dbReference>
<dbReference type="GO" id="GO:0044192">
    <property type="term" value="C:host cell mitochondrial inner membrane"/>
    <property type="evidence" value="ECO:0007669"/>
    <property type="project" value="UniProtKB-SubCell"/>
</dbReference>
<dbReference type="GO" id="GO:0042025">
    <property type="term" value="C:host cell nucleus"/>
    <property type="evidence" value="ECO:0007669"/>
    <property type="project" value="UniProtKB-SubCell"/>
</dbReference>
<dbReference type="GO" id="GO:0016020">
    <property type="term" value="C:membrane"/>
    <property type="evidence" value="ECO:0007669"/>
    <property type="project" value="UniProtKB-UniRule"/>
</dbReference>
<dbReference type="GO" id="GO:0052150">
    <property type="term" value="P:symbiont-mediated perturbation of host apoptosis"/>
    <property type="evidence" value="ECO:0007669"/>
    <property type="project" value="UniProtKB-KW"/>
</dbReference>
<dbReference type="GO" id="GO:0039545">
    <property type="term" value="P:symbiont-mediated suppression of host cytoplasmic pattern recognition receptor signaling pathway via inhibition of MAVS activity"/>
    <property type="evidence" value="ECO:0007669"/>
    <property type="project" value="UniProtKB-KW"/>
</dbReference>
<dbReference type="HAMAP" id="MF_04064">
    <property type="entry name" value="INFV_PB1F2"/>
    <property type="match status" value="1"/>
</dbReference>
<dbReference type="InterPro" id="IPR021045">
    <property type="entry name" value="Flu_proapoptotic_PB1-F2"/>
</dbReference>
<dbReference type="Pfam" id="PF11986">
    <property type="entry name" value="PB1-F2"/>
    <property type="match status" value="1"/>
</dbReference>
<evidence type="ECO:0000255" key="1">
    <source>
        <dbReference type="HAMAP-Rule" id="MF_04064"/>
    </source>
</evidence>
<evidence type="ECO:0000256" key="2">
    <source>
        <dbReference type="SAM" id="MobiDB-lite"/>
    </source>
</evidence>
<feature type="chain" id="PRO_0000278711" description="Protein PB1-F2">
    <location>
        <begin position="1"/>
        <end position="90"/>
    </location>
</feature>
<feature type="region of interest" description="Disordered" evidence="2">
    <location>
        <begin position="1"/>
        <end position="26"/>
    </location>
</feature>
<feature type="region of interest" description="Mitochondrial targeting sequence" evidence="1">
    <location>
        <begin position="65"/>
        <end position="87"/>
    </location>
</feature>
<feature type="compositionally biased region" description="Polar residues" evidence="2">
    <location>
        <begin position="7"/>
        <end position="16"/>
    </location>
</feature>
<feature type="site" description="Low pathogenicity" evidence="1">
    <location>
        <position position="66"/>
    </location>
</feature>
<proteinExistence type="inferred from homology"/>
<sequence length="90" mass="10967">MEREQDTPWTQSTEHINIQKRENGQQIQKLEHPNLTQLMDHYLRIMNQVDMHKQIASWKQWLSLKNPTQESLKTRVLKRWRLFNKQGLTS</sequence>
<keyword id="KW-0053">Apoptosis</keyword>
<keyword id="KW-1035">Host cytoplasm</keyword>
<keyword id="KW-1043">Host membrane</keyword>
<keyword id="KW-1045">Host mitochondrion</keyword>
<keyword id="KW-1046">Host mitochondrion inner membrane</keyword>
<keyword id="KW-1048">Host nucleus</keyword>
<keyword id="KW-0945">Host-virus interaction</keyword>
<keyword id="KW-1090">Inhibition of host innate immune response by virus</keyword>
<keyword id="KW-1097">Inhibition of host MAVS by virus</keyword>
<keyword id="KW-1113">Inhibition of host RLR pathway by virus</keyword>
<keyword id="KW-0472">Membrane</keyword>
<keyword id="KW-1119">Modulation of host cell apoptosis by virus</keyword>
<keyword id="KW-0899">Viral immunoevasion</keyword>